<gene>
    <name type="ordered locus">LCABL_08470</name>
</gene>
<feature type="chain" id="PRO_1000198236" description="UPF0297 protein LCABL_08470">
    <location>
        <begin position="1"/>
        <end position="86"/>
    </location>
</feature>
<comment type="similarity">
    <text evidence="1">Belongs to the UPF0297 family.</text>
</comment>
<reference key="1">
    <citation type="submission" date="2008-06" db="EMBL/GenBank/DDBJ databases">
        <title>Lactobacillus casei BL23 complete genome sequence.</title>
        <authorList>
            <person name="Maze A."/>
            <person name="Boel G."/>
            <person name="Bourand A."/>
            <person name="Loux V."/>
            <person name="Gibrat J.F."/>
            <person name="Zuniga M."/>
            <person name="Hartke A."/>
            <person name="Deutscher J."/>
        </authorList>
    </citation>
    <scope>NUCLEOTIDE SEQUENCE [LARGE SCALE GENOMIC DNA]</scope>
    <source>
        <strain>BL23</strain>
    </source>
</reference>
<evidence type="ECO:0000255" key="1">
    <source>
        <dbReference type="HAMAP-Rule" id="MF_01507"/>
    </source>
</evidence>
<dbReference type="EMBL" id="FM177140">
    <property type="protein sequence ID" value="CAQ65970.1"/>
    <property type="molecule type" value="Genomic_DNA"/>
</dbReference>
<dbReference type="SMR" id="B3WC69"/>
<dbReference type="KEGG" id="lcb:LCABL_08470"/>
<dbReference type="HOGENOM" id="CLU_162466_0_0_9"/>
<dbReference type="HAMAP" id="MF_01507">
    <property type="entry name" value="UPF0297"/>
    <property type="match status" value="1"/>
</dbReference>
<dbReference type="InterPro" id="IPR009309">
    <property type="entry name" value="IreB"/>
</dbReference>
<dbReference type="NCBIfam" id="NF003997">
    <property type="entry name" value="PRK05473.1"/>
    <property type="match status" value="1"/>
</dbReference>
<dbReference type="PANTHER" id="PTHR40067">
    <property type="entry name" value="UPF0297 PROTEIN YRZL"/>
    <property type="match status" value="1"/>
</dbReference>
<dbReference type="PANTHER" id="PTHR40067:SF1">
    <property type="entry name" value="UPF0297 PROTEIN YRZL"/>
    <property type="match status" value="1"/>
</dbReference>
<dbReference type="Pfam" id="PF06135">
    <property type="entry name" value="IreB"/>
    <property type="match status" value="1"/>
</dbReference>
<dbReference type="PIRSF" id="PIRSF037258">
    <property type="entry name" value="DUF965_bac"/>
    <property type="match status" value="1"/>
</dbReference>
<protein>
    <recommendedName>
        <fullName evidence="1">UPF0297 protein LCABL_08470</fullName>
    </recommendedName>
</protein>
<proteinExistence type="inferred from homology"/>
<accession>B3WC69</accession>
<name>Y847_LACCB</name>
<organism>
    <name type="scientific">Lacticaseibacillus casei (strain BL23)</name>
    <name type="common">Lactobacillus casei</name>
    <dbReference type="NCBI Taxonomy" id="543734"/>
    <lineage>
        <taxon>Bacteria</taxon>
        <taxon>Bacillati</taxon>
        <taxon>Bacillota</taxon>
        <taxon>Bacilli</taxon>
        <taxon>Lactobacillales</taxon>
        <taxon>Lactobacillaceae</taxon>
        <taxon>Lacticaseibacillus</taxon>
    </lineage>
</organism>
<sequence>MSTLDQTVHFDFRDNNPKNVHETLETVYKALEEKGYNPINQIVGYLISGDPAYIPRYNDARNLIRKHERDEIIEELVRNYLGKEQA</sequence>